<accession>Q11HQ6</accession>
<organism>
    <name type="scientific">Chelativorans sp. (strain BNC1)</name>
    <dbReference type="NCBI Taxonomy" id="266779"/>
    <lineage>
        <taxon>Bacteria</taxon>
        <taxon>Pseudomonadati</taxon>
        <taxon>Pseudomonadota</taxon>
        <taxon>Alphaproteobacteria</taxon>
        <taxon>Hyphomicrobiales</taxon>
        <taxon>Phyllobacteriaceae</taxon>
        <taxon>Chelativorans</taxon>
    </lineage>
</organism>
<gene>
    <name evidence="1" type="primary">rpsS</name>
    <name type="ordered locus">Meso_1674</name>
</gene>
<comment type="function">
    <text evidence="1">Protein S19 forms a complex with S13 that binds strongly to the 16S ribosomal RNA.</text>
</comment>
<comment type="similarity">
    <text evidence="1">Belongs to the universal ribosomal protein uS19 family.</text>
</comment>
<dbReference type="EMBL" id="CP000390">
    <property type="protein sequence ID" value="ABG63069.1"/>
    <property type="molecule type" value="Genomic_DNA"/>
</dbReference>
<dbReference type="SMR" id="Q11HQ6"/>
<dbReference type="STRING" id="266779.Meso_1674"/>
<dbReference type="KEGG" id="mes:Meso_1674"/>
<dbReference type="eggNOG" id="COG0185">
    <property type="taxonomic scope" value="Bacteria"/>
</dbReference>
<dbReference type="HOGENOM" id="CLU_144911_0_1_5"/>
<dbReference type="OrthoDB" id="9797833at2"/>
<dbReference type="GO" id="GO:0005737">
    <property type="term" value="C:cytoplasm"/>
    <property type="evidence" value="ECO:0007669"/>
    <property type="project" value="UniProtKB-ARBA"/>
</dbReference>
<dbReference type="GO" id="GO:0015935">
    <property type="term" value="C:small ribosomal subunit"/>
    <property type="evidence" value="ECO:0007669"/>
    <property type="project" value="InterPro"/>
</dbReference>
<dbReference type="GO" id="GO:0019843">
    <property type="term" value="F:rRNA binding"/>
    <property type="evidence" value="ECO:0007669"/>
    <property type="project" value="UniProtKB-UniRule"/>
</dbReference>
<dbReference type="GO" id="GO:0003735">
    <property type="term" value="F:structural constituent of ribosome"/>
    <property type="evidence" value="ECO:0007669"/>
    <property type="project" value="InterPro"/>
</dbReference>
<dbReference type="GO" id="GO:0000028">
    <property type="term" value="P:ribosomal small subunit assembly"/>
    <property type="evidence" value="ECO:0007669"/>
    <property type="project" value="TreeGrafter"/>
</dbReference>
<dbReference type="GO" id="GO:0006412">
    <property type="term" value="P:translation"/>
    <property type="evidence" value="ECO:0007669"/>
    <property type="project" value="UniProtKB-UniRule"/>
</dbReference>
<dbReference type="FunFam" id="3.30.860.10:FF:000001">
    <property type="entry name" value="30S ribosomal protein S19"/>
    <property type="match status" value="1"/>
</dbReference>
<dbReference type="Gene3D" id="3.30.860.10">
    <property type="entry name" value="30s Ribosomal Protein S19, Chain A"/>
    <property type="match status" value="1"/>
</dbReference>
<dbReference type="HAMAP" id="MF_00531">
    <property type="entry name" value="Ribosomal_uS19"/>
    <property type="match status" value="1"/>
</dbReference>
<dbReference type="InterPro" id="IPR002222">
    <property type="entry name" value="Ribosomal_uS19"/>
</dbReference>
<dbReference type="InterPro" id="IPR005732">
    <property type="entry name" value="Ribosomal_uS19_bac-type"/>
</dbReference>
<dbReference type="InterPro" id="IPR020934">
    <property type="entry name" value="Ribosomal_uS19_CS"/>
</dbReference>
<dbReference type="InterPro" id="IPR023575">
    <property type="entry name" value="Ribosomal_uS19_SF"/>
</dbReference>
<dbReference type="NCBIfam" id="TIGR01050">
    <property type="entry name" value="rpsS_bact"/>
    <property type="match status" value="1"/>
</dbReference>
<dbReference type="PANTHER" id="PTHR11880">
    <property type="entry name" value="RIBOSOMAL PROTEIN S19P FAMILY MEMBER"/>
    <property type="match status" value="1"/>
</dbReference>
<dbReference type="PANTHER" id="PTHR11880:SF8">
    <property type="entry name" value="SMALL RIBOSOMAL SUBUNIT PROTEIN US19M"/>
    <property type="match status" value="1"/>
</dbReference>
<dbReference type="Pfam" id="PF00203">
    <property type="entry name" value="Ribosomal_S19"/>
    <property type="match status" value="1"/>
</dbReference>
<dbReference type="PIRSF" id="PIRSF002144">
    <property type="entry name" value="Ribosomal_S19"/>
    <property type="match status" value="1"/>
</dbReference>
<dbReference type="PRINTS" id="PR00975">
    <property type="entry name" value="RIBOSOMALS19"/>
</dbReference>
<dbReference type="SUPFAM" id="SSF54570">
    <property type="entry name" value="Ribosomal protein S19"/>
    <property type="match status" value="1"/>
</dbReference>
<dbReference type="PROSITE" id="PS00323">
    <property type="entry name" value="RIBOSOMAL_S19"/>
    <property type="match status" value="1"/>
</dbReference>
<sequence length="92" mass="10442">MSRSVWKGPFVDGYLLKKADKSRESGRKEVIKTWSRRSTILPQFVGLTFGVYNGQKHIPVSVSEEMVGHKLGEFAPTRTYYGHGADKKAKRK</sequence>
<name>RS19_CHESB</name>
<reference key="1">
    <citation type="submission" date="2006-06" db="EMBL/GenBank/DDBJ databases">
        <title>Complete sequence of chromosome of Mesorhizobium sp. BNC1.</title>
        <authorList>
            <consortium name="US DOE Joint Genome Institute"/>
            <person name="Copeland A."/>
            <person name="Lucas S."/>
            <person name="Lapidus A."/>
            <person name="Barry K."/>
            <person name="Detter J.C."/>
            <person name="Glavina del Rio T."/>
            <person name="Hammon N."/>
            <person name="Israni S."/>
            <person name="Dalin E."/>
            <person name="Tice H."/>
            <person name="Pitluck S."/>
            <person name="Chertkov O."/>
            <person name="Brettin T."/>
            <person name="Bruce D."/>
            <person name="Han C."/>
            <person name="Tapia R."/>
            <person name="Gilna P."/>
            <person name="Schmutz J."/>
            <person name="Larimer F."/>
            <person name="Land M."/>
            <person name="Hauser L."/>
            <person name="Kyrpides N."/>
            <person name="Mikhailova N."/>
            <person name="Richardson P."/>
        </authorList>
    </citation>
    <scope>NUCLEOTIDE SEQUENCE [LARGE SCALE GENOMIC DNA]</scope>
    <source>
        <strain>BNC1</strain>
    </source>
</reference>
<protein>
    <recommendedName>
        <fullName evidence="1">Small ribosomal subunit protein uS19</fullName>
    </recommendedName>
    <alternativeName>
        <fullName evidence="2">30S ribosomal protein S19</fullName>
    </alternativeName>
</protein>
<evidence type="ECO:0000255" key="1">
    <source>
        <dbReference type="HAMAP-Rule" id="MF_00531"/>
    </source>
</evidence>
<evidence type="ECO:0000305" key="2"/>
<proteinExistence type="inferred from homology"/>
<feature type="chain" id="PRO_0000265380" description="Small ribosomal subunit protein uS19">
    <location>
        <begin position="1"/>
        <end position="92"/>
    </location>
</feature>
<keyword id="KW-0687">Ribonucleoprotein</keyword>
<keyword id="KW-0689">Ribosomal protein</keyword>
<keyword id="KW-0694">RNA-binding</keyword>
<keyword id="KW-0699">rRNA-binding</keyword>